<comment type="function">
    <text evidence="1">Guanylyltransferase that catalyzes the activation of (2R)-3-phosphoglycerate (3PG) as 3-[(R)-glyceryl]-diphospho-5'-guanosine, via the condensation of 3PG with GTP. It is involved in the biosynthesis of a derivative of the hydride carrier cofactor coenzyme F420, 3PG-F420.</text>
</comment>
<comment type="catalytic activity">
    <reaction evidence="1">
        <text>(2R)-3-phosphoglycerate + GTP + H(+) = 3-[(R)-glyceryl]-diphospho-5'-guanosine + diphosphate</text>
        <dbReference type="Rhea" id="RHEA:63440"/>
        <dbReference type="ChEBI" id="CHEBI:15378"/>
        <dbReference type="ChEBI" id="CHEBI:33019"/>
        <dbReference type="ChEBI" id="CHEBI:37565"/>
        <dbReference type="ChEBI" id="CHEBI:58272"/>
        <dbReference type="ChEBI" id="CHEBI:147306"/>
        <dbReference type="EC" id="2.7.7.106"/>
    </reaction>
</comment>
<comment type="pathway">
    <text evidence="1">Cofactor biosynthesis; coenzyme F420 biosynthesis.</text>
</comment>
<comment type="similarity">
    <text evidence="1">Belongs to the CofC family.</text>
</comment>
<keyword id="KW-0342">GTP-binding</keyword>
<keyword id="KW-0547">Nucleotide-binding</keyword>
<keyword id="KW-0548">Nucleotidyltransferase</keyword>
<keyword id="KW-0808">Transferase</keyword>
<accession>Q47WW8</accession>
<organism>
    <name type="scientific">Colwellia psychrerythraea (strain 34H / ATCC BAA-681)</name>
    <name type="common">Vibrio psychroerythus</name>
    <dbReference type="NCBI Taxonomy" id="167879"/>
    <lineage>
        <taxon>Bacteria</taxon>
        <taxon>Pseudomonadati</taxon>
        <taxon>Pseudomonadota</taxon>
        <taxon>Gammaproteobacteria</taxon>
        <taxon>Alteromonadales</taxon>
        <taxon>Colwelliaceae</taxon>
        <taxon>Colwellia</taxon>
    </lineage>
</organism>
<name>FBID_COLP3</name>
<feature type="chain" id="PRO_0000398682" description="3-phospho-D-glycerate guanylyltransferase">
    <location>
        <begin position="1"/>
        <end position="210"/>
    </location>
</feature>
<protein>
    <recommendedName>
        <fullName evidence="1">3-phospho-D-glycerate guanylyltransferase</fullName>
        <shortName evidence="1">3PG guanylyltransferase</shortName>
        <ecNumber evidence="1">2.7.7.106</ecNumber>
    </recommendedName>
</protein>
<gene>
    <name evidence="1" type="primary">fbiD</name>
    <name type="ordered locus">CPS_4046</name>
</gene>
<dbReference type="EC" id="2.7.7.106" evidence="1"/>
<dbReference type="EMBL" id="CP000083">
    <property type="protein sequence ID" value="AAZ28067.1"/>
    <property type="molecule type" value="Genomic_DNA"/>
</dbReference>
<dbReference type="RefSeq" id="WP_011044784.1">
    <property type="nucleotide sequence ID" value="NC_003910.7"/>
</dbReference>
<dbReference type="SMR" id="Q47WW8"/>
<dbReference type="STRING" id="167879.CPS_4046"/>
<dbReference type="DNASU" id="3522326"/>
<dbReference type="KEGG" id="cps:CPS_4046"/>
<dbReference type="HOGENOM" id="CLU_076569_1_0_6"/>
<dbReference type="UniPathway" id="UPA00071"/>
<dbReference type="Proteomes" id="UP000000547">
    <property type="component" value="Chromosome"/>
</dbReference>
<dbReference type="GO" id="GO:0005525">
    <property type="term" value="F:GTP binding"/>
    <property type="evidence" value="ECO:0007669"/>
    <property type="project" value="UniProtKB-KW"/>
</dbReference>
<dbReference type="GO" id="GO:0043814">
    <property type="term" value="F:phospholactate guanylyltransferase activity"/>
    <property type="evidence" value="ECO:0007669"/>
    <property type="project" value="InterPro"/>
</dbReference>
<dbReference type="GO" id="GO:0052645">
    <property type="term" value="P:F420-0 metabolic process"/>
    <property type="evidence" value="ECO:0007669"/>
    <property type="project" value="UniProtKB-UniRule"/>
</dbReference>
<dbReference type="Gene3D" id="3.90.550.10">
    <property type="entry name" value="Spore Coat Polysaccharide Biosynthesis Protein SpsA, Chain A"/>
    <property type="match status" value="1"/>
</dbReference>
<dbReference type="HAMAP" id="MF_02114">
    <property type="entry name" value="CofC"/>
    <property type="match status" value="1"/>
</dbReference>
<dbReference type="InterPro" id="IPR002835">
    <property type="entry name" value="CofC"/>
</dbReference>
<dbReference type="InterPro" id="IPR029044">
    <property type="entry name" value="Nucleotide-diphossugar_trans"/>
</dbReference>
<dbReference type="NCBIfam" id="TIGR03552">
    <property type="entry name" value="F420_cofC"/>
    <property type="match status" value="1"/>
</dbReference>
<dbReference type="PANTHER" id="PTHR40392">
    <property type="entry name" value="2-PHOSPHO-L-LACTATE GUANYLYLTRANSFERASE"/>
    <property type="match status" value="1"/>
</dbReference>
<dbReference type="PANTHER" id="PTHR40392:SF1">
    <property type="entry name" value="2-PHOSPHO-L-LACTATE GUANYLYLTRANSFERASE"/>
    <property type="match status" value="1"/>
</dbReference>
<dbReference type="Pfam" id="PF01983">
    <property type="entry name" value="CofC"/>
    <property type="match status" value="1"/>
</dbReference>
<dbReference type="SUPFAM" id="SSF53448">
    <property type="entry name" value="Nucleotide-diphospho-sugar transferases"/>
    <property type="match status" value="1"/>
</dbReference>
<reference key="1">
    <citation type="journal article" date="2005" name="Proc. Natl. Acad. Sci. U.S.A.">
        <title>The psychrophilic lifestyle as revealed by the genome sequence of Colwellia psychrerythraea 34H through genomic and proteomic analyses.</title>
        <authorList>
            <person name="Methe B.A."/>
            <person name="Nelson K.E."/>
            <person name="Deming J.W."/>
            <person name="Momen B."/>
            <person name="Melamud E."/>
            <person name="Zhang X."/>
            <person name="Moult J."/>
            <person name="Madupu R."/>
            <person name="Nelson W.C."/>
            <person name="Dodson R.J."/>
            <person name="Brinkac L.M."/>
            <person name="Daugherty S.C."/>
            <person name="Durkin A.S."/>
            <person name="DeBoy R.T."/>
            <person name="Kolonay J.F."/>
            <person name="Sullivan S.A."/>
            <person name="Zhou L."/>
            <person name="Davidsen T.M."/>
            <person name="Wu M."/>
            <person name="Huston A.L."/>
            <person name="Lewis M."/>
            <person name="Weaver B."/>
            <person name="Weidman J.F."/>
            <person name="Khouri H."/>
            <person name="Utterback T.R."/>
            <person name="Feldblyum T.V."/>
            <person name="Fraser C.M."/>
        </authorList>
    </citation>
    <scope>NUCLEOTIDE SEQUENCE [LARGE SCALE GENOMIC DNA]</scope>
    <source>
        <strain>34H / ATCC BAA-681</strain>
    </source>
</reference>
<evidence type="ECO:0000255" key="1">
    <source>
        <dbReference type="HAMAP-Rule" id="MF_02114"/>
    </source>
</evidence>
<proteinExistence type="inferred from homology"/>
<sequence>MRTNIVIPMKDPQLSKTRLDPQLSSRQRQALALSMFKTTLSFFNKYFPQHHLLVVTASEFISDIACTYGASVLIETKLGLRQAVESAARWSLNNDFQSQLLIPADIAELDYREFERLLMIYRPVPSVLLCPAFDLGTNALLTTPPNAIPFLYGIDSSLAHQRVAQERDIVCQVIKLPALALDIDTPDDLELLALLSSPVTQELNKLCKTA</sequence>